<sequence length="258" mass="29872">MKNITFIFFILLASPLYANGDKLYRADSRPPDEIKRSGGLMPRGHNEYFDRGTQMNINLYDHARGTQTGFVRYDDGYVSTSLSLRSAHLAGQSILSGYSTYYIYVIATAPNMFNVNDVLGVYSPHPYEQEVSALGGIPYSQIYGWYRVNFGVIDERLHRNREYRDRYYRNLNIAPAEDGYRLAGFPPDHQAWREEPWIHHAPQGCGNSSRTITGDTCNEETQNLSTIYLRKYQSKVKRQIFSDYQSEVDIYNRIRNEL</sequence>
<evidence type="ECO:0000250" key="1"/>
<evidence type="ECO:0000305" key="2"/>
<organism>
    <name type="scientific">Escherichia coli O78:H11 (strain H10407 / ETEC)</name>
    <dbReference type="NCBI Taxonomy" id="316401"/>
    <lineage>
        <taxon>Bacteria</taxon>
        <taxon>Pseudomonadati</taxon>
        <taxon>Pseudomonadota</taxon>
        <taxon>Gammaproteobacteria</taxon>
        <taxon>Enterobacterales</taxon>
        <taxon>Enterobacteriaceae</taxon>
        <taxon>Escherichia</taxon>
    </lineage>
</organism>
<keyword id="KW-1015">Disulfide bond</keyword>
<keyword id="KW-0260">Enterotoxin</keyword>
<keyword id="KW-0614">Plasmid</keyword>
<keyword id="KW-0732">Signal</keyword>
<keyword id="KW-0800">Toxin</keyword>
<keyword id="KW-0843">Virulence</keyword>
<proteinExistence type="inferred from homology"/>
<geneLocation type="plasmid">
    <name>pEntH10407</name>
</geneLocation>
<geneLocation type="plasmid">
    <name>p666</name>
</geneLocation>
<name>ELAH_ECOH1</name>
<protein>
    <recommendedName>
        <fullName>Heat-labile enterotoxin A chain</fullName>
    </recommendedName>
    <alternativeName>
        <fullName>LT-A, human</fullName>
        <shortName>LTH-A</shortName>
    </alternativeName>
</protein>
<feature type="signal peptide" evidence="1">
    <location>
        <begin position="1"/>
        <end position="18"/>
    </location>
</feature>
<feature type="chain" id="PRO_0000019352" description="Heat-labile enterotoxin A chain">
    <location>
        <begin position="19"/>
        <end position="258"/>
    </location>
</feature>
<feature type="active site" evidence="1">
    <location>
        <position position="128"/>
    </location>
</feature>
<feature type="binding site" evidence="1">
    <location>
        <begin position="25"/>
        <end position="39"/>
    </location>
    <ligand>
        <name>NAD(+)</name>
        <dbReference type="ChEBI" id="CHEBI:57540"/>
    </ligand>
</feature>
<feature type="disulfide bond" evidence="1">
    <location>
        <begin position="205"/>
        <end position="217"/>
    </location>
</feature>
<feature type="sequence conflict" description="In Ref. 1; AAA24685 and 3; AAC60440." evidence="2" ref="1 3">
    <original>N</original>
    <variation>D</variation>
    <location>
        <position position="207"/>
    </location>
</feature>
<comment type="function">
    <text>The biological activity of the toxin is produced by the A chain, which activates intracellular adenyl cyclase.</text>
</comment>
<comment type="subunit">
    <text>Heterohexamer of one A chain and of five B chains.</text>
</comment>
<comment type="similarity">
    <text evidence="2">Belongs to the enterotoxin A family.</text>
</comment>
<reference key="1">
    <citation type="journal article" date="1984" name="J. Biol. Chem.">
        <title>Primary structure of heat-labile enterotoxin produced by Escherichia coli pathogenic for humans.</title>
        <authorList>
            <person name="Yamamoto T."/>
            <person name="Tamura T."/>
            <person name="Yokota T."/>
        </authorList>
    </citation>
    <scope>NUCLEOTIDE SEQUENCE [GENOMIC DNA]</scope>
    <source>
        <strain>H10407 / ETEC</strain>
    </source>
</reference>
<reference key="2">
    <citation type="journal article" date="1987" name="J. Bacteriol.">
        <title>Evolutionary origin of pathogenic determinants in enterotoxigenic Escherichia coli and Vibrio cholerae O1.</title>
        <authorList>
            <person name="Yamamoto T."/>
            <person name="Gojobori T."/>
            <person name="Yokota T."/>
        </authorList>
    </citation>
    <scope>SEQUENCE REVISION TO 207</scope>
    <source>
        <strain>H10407 / ETEC</strain>
    </source>
</reference>
<reference key="3">
    <citation type="journal article" date="1993" name="FEMS Microbiol. Lett.">
        <title>Amino acid sequence of heat-labile enterotoxin from chicken enterotoxigenic Escherichia coli is identical to that of human strain H 10407.</title>
        <authorList>
            <person name="Inoue T."/>
            <person name="Tsuji T."/>
            <person name="Koto M."/>
            <person name="Imamura S."/>
            <person name="Miyama A."/>
        </authorList>
    </citation>
    <scope>NUCLEOTIDE SEQUENCE [GENOMIC DNA]</scope>
    <source>
        <strain>H10407 / ETEC</strain>
    </source>
</reference>
<reference key="4">
    <citation type="journal article" date="2009" name="DNA Res.">
        <title>Nucleotide sequence analysis of the enterotoxigenic Escherichia coli Ent plasmid.</title>
        <authorList>
            <person name="Ochi S."/>
            <person name="Shimizu T."/>
            <person name="Ohtani K."/>
            <person name="Ichinose Y."/>
            <person name="Arimitsu H."/>
            <person name="Tsukamoto K."/>
            <person name="Kato M."/>
            <person name="Tsuji T."/>
        </authorList>
    </citation>
    <scope>NUCLEOTIDE SEQUENCE [LARGE SCALE GENOMIC DNA]</scope>
    <source>
        <strain>H10407 / ETEC</strain>
        <plasmid>pEntH10407</plasmid>
    </source>
</reference>
<reference key="5">
    <citation type="journal article" date="2010" name="J. Bacteriol.">
        <title>A commensal gone bad: complete genome sequence of the prototypical enterotoxigenic Escherichia coli strain H10407.</title>
        <authorList>
            <person name="Crossman L.C."/>
            <person name="Chaudhuri R.R."/>
            <person name="Beatson S.A."/>
            <person name="Wells T.J."/>
            <person name="Desvaux M."/>
            <person name="Cunningham A.F."/>
            <person name="Petty N.K."/>
            <person name="Mahon V."/>
            <person name="Brinkley C."/>
            <person name="Hobman J.L."/>
            <person name="Savarino S.J."/>
            <person name="Turner S.M."/>
            <person name="Pallen M.J."/>
            <person name="Penn C.W."/>
            <person name="Parkhill J."/>
            <person name="Turner A.K."/>
            <person name="Johnson T.J."/>
            <person name="Thomson N.R."/>
            <person name="Smith S.G."/>
            <person name="Henderson I.R."/>
        </authorList>
    </citation>
    <scope>NUCLEOTIDE SEQUENCE [LARGE SCALE GENOMIC DNA]</scope>
    <source>
        <strain>H10407 / ETEC</strain>
        <plasmid>p666</plasmid>
    </source>
</reference>
<reference key="6">
    <citation type="journal article" date="1995" name="Mol. Microbiol.">
        <title>Identification of errors among database sequence entries and comparison of correct amino acid sequences for the heat-labile enterotoxins of Escherichia coli and Vibrio cholerae.</title>
        <authorList>
            <person name="Domenighini M."/>
            <person name="Pizza M."/>
            <person name="Jobling M.G."/>
            <person name="Holmes R.K."/>
            <person name="Rappuoli R."/>
        </authorList>
    </citation>
    <scope>DISCUSSION OF SEQUENCE</scope>
</reference>
<gene>
    <name type="primary">eltA</name>
    <name type="synonym">ltpA</name>
    <name type="synonym">toxA</name>
    <name type="ordered locus">ETEC_p666_0660</name>
</gene>
<accession>P43530</accession>
<accession>D0Z6T2</accession>
<dbReference type="EMBL" id="K01995">
    <property type="protein sequence ID" value="AAA24685.1"/>
    <property type="molecule type" value="Genomic_DNA"/>
</dbReference>
<dbReference type="EMBL" id="S60731">
    <property type="protein sequence ID" value="AAC60440.2"/>
    <property type="molecule type" value="Genomic_DNA"/>
</dbReference>
<dbReference type="EMBL" id="AP010910">
    <property type="protein sequence ID" value="BAI49223.1"/>
    <property type="molecule type" value="Genomic_DNA"/>
</dbReference>
<dbReference type="EMBL" id="FN649417">
    <property type="protein sequence ID" value="CBJ04426.1"/>
    <property type="molecule type" value="Genomic_DNA"/>
</dbReference>
<dbReference type="PIR" id="I55231">
    <property type="entry name" value="QLECA"/>
</dbReference>
<dbReference type="RefSeq" id="WP_001426678.1">
    <property type="nucleotide sequence ID" value="NC_017722.1"/>
</dbReference>
<dbReference type="RefSeq" id="YP_003293997.1">
    <property type="nucleotide sequence ID" value="NC_013507.1"/>
</dbReference>
<dbReference type="SMR" id="P43530"/>
<dbReference type="TCDB" id="1.C.72.4.1">
    <property type="family name" value="the pertussis toxin (ptx) family"/>
</dbReference>
<dbReference type="KEGG" id="elh:ETEC_p666_0660"/>
<dbReference type="HOGENOM" id="CLU_091751_0_0_6"/>
<dbReference type="GO" id="GO:0005615">
    <property type="term" value="C:extracellular space"/>
    <property type="evidence" value="ECO:0007669"/>
    <property type="project" value="InterPro"/>
</dbReference>
<dbReference type="GO" id="GO:0090729">
    <property type="term" value="F:toxin activity"/>
    <property type="evidence" value="ECO:0007669"/>
    <property type="project" value="UniProtKB-KW"/>
</dbReference>
<dbReference type="Gene3D" id="3.90.210.10">
    <property type="entry name" value="Heat-Labile Enterotoxin, subunit A"/>
    <property type="match status" value="1"/>
</dbReference>
<dbReference type="InterPro" id="IPR001144">
    <property type="entry name" value="Enterotoxin_A"/>
</dbReference>
<dbReference type="Pfam" id="PF01375">
    <property type="entry name" value="Enterotoxin_a"/>
    <property type="match status" value="1"/>
</dbReference>
<dbReference type="PRINTS" id="PR00771">
    <property type="entry name" value="ENTEROTOXINA"/>
</dbReference>
<dbReference type="SUPFAM" id="SSF56399">
    <property type="entry name" value="ADP-ribosylation"/>
    <property type="match status" value="1"/>
</dbReference>